<reference key="1">
    <citation type="journal article" date="2001" name="J. Bacteriol.">
        <title>Genome sequence and comparative analysis of the solvent-producing bacterium Clostridium acetobutylicum.</title>
        <authorList>
            <person name="Noelling J."/>
            <person name="Breton G."/>
            <person name="Omelchenko M.V."/>
            <person name="Makarova K.S."/>
            <person name="Zeng Q."/>
            <person name="Gibson R."/>
            <person name="Lee H.M."/>
            <person name="Dubois J."/>
            <person name="Qiu D."/>
            <person name="Hitti J."/>
            <person name="Wolf Y.I."/>
            <person name="Tatusov R.L."/>
            <person name="Sabathe F."/>
            <person name="Doucette-Stamm L.A."/>
            <person name="Soucaille P."/>
            <person name="Daly M.J."/>
            <person name="Bennett G.N."/>
            <person name="Koonin E.V."/>
            <person name="Smith D.R."/>
        </authorList>
    </citation>
    <scope>NUCLEOTIDE SEQUENCE [LARGE SCALE GENOMIC DNA]</scope>
    <source>
        <strain>ATCC 824 / DSM 792 / JCM 1419 / IAM 19013 / LMG 5710 / NBRC 13948 / NRRL B-527 / VKM B-1787 / 2291 / W</strain>
    </source>
</reference>
<accession>Q97ID1</accession>
<protein>
    <recommendedName>
        <fullName evidence="1">Putative regulatory protein CA_C1717</fullName>
    </recommendedName>
</protein>
<keyword id="KW-1185">Reference proteome</keyword>
<name>Y1717_CLOAB</name>
<proteinExistence type="inferred from homology"/>
<organism>
    <name type="scientific">Clostridium acetobutylicum (strain ATCC 824 / DSM 792 / JCM 1419 / IAM 19013 / LMG 5710 / NBRC 13948 / NRRL B-527 / VKM B-1787 / 2291 / W)</name>
    <dbReference type="NCBI Taxonomy" id="272562"/>
    <lineage>
        <taxon>Bacteria</taxon>
        <taxon>Bacillati</taxon>
        <taxon>Bacillota</taxon>
        <taxon>Clostridia</taxon>
        <taxon>Eubacteriales</taxon>
        <taxon>Clostridiaceae</taxon>
        <taxon>Clostridium</taxon>
    </lineage>
</organism>
<dbReference type="EMBL" id="AE001437">
    <property type="protein sequence ID" value="AAK79683.1"/>
    <property type="molecule type" value="Genomic_DNA"/>
</dbReference>
<dbReference type="PIR" id="H97111">
    <property type="entry name" value="H97111"/>
</dbReference>
<dbReference type="RefSeq" id="NP_348343.1">
    <property type="nucleotide sequence ID" value="NC_003030.1"/>
</dbReference>
<dbReference type="SMR" id="Q97ID1"/>
<dbReference type="STRING" id="272562.CA_C1717"/>
<dbReference type="KEGG" id="cac:CA_C1717"/>
<dbReference type="PATRIC" id="fig|272562.8.peg.1919"/>
<dbReference type="eggNOG" id="COG2052">
    <property type="taxonomic scope" value="Bacteria"/>
</dbReference>
<dbReference type="HOGENOM" id="CLU_165326_0_0_9"/>
<dbReference type="OrthoDB" id="5432174at2"/>
<dbReference type="Proteomes" id="UP000000814">
    <property type="component" value="Chromosome"/>
</dbReference>
<dbReference type="HAMAP" id="MF_01503">
    <property type="entry name" value="RemA"/>
    <property type="match status" value="1"/>
</dbReference>
<dbReference type="InterPro" id="IPR007169">
    <property type="entry name" value="RemA-like"/>
</dbReference>
<dbReference type="NCBIfam" id="NF046064">
    <property type="entry name" value="MtxBflmRegRemA"/>
    <property type="match status" value="1"/>
</dbReference>
<dbReference type="NCBIfam" id="NF003315">
    <property type="entry name" value="PRK04323.1"/>
    <property type="match status" value="1"/>
</dbReference>
<dbReference type="PANTHER" id="PTHR38449:SF1">
    <property type="entry name" value="REGULATORY PROTEIN SSL2874-RELATED"/>
    <property type="match status" value="1"/>
</dbReference>
<dbReference type="PANTHER" id="PTHR38449">
    <property type="entry name" value="REGULATORY PROTEIN TM_1690-RELATED"/>
    <property type="match status" value="1"/>
</dbReference>
<dbReference type="Pfam" id="PF04025">
    <property type="entry name" value="RemA-like"/>
    <property type="match status" value="1"/>
</dbReference>
<sequence length="92" mass="10098">MDIKLINIGFGNIVSANRLVAIVSPESAPIKRIIQEARDRGMLIDATYGRRTRAVIITDSDHVILSAVQPETVAHRLSTKDDGTNTVDEVEE</sequence>
<gene>
    <name type="ordered locus">CA_C1717</name>
</gene>
<evidence type="ECO:0000255" key="1">
    <source>
        <dbReference type="HAMAP-Rule" id="MF_01503"/>
    </source>
</evidence>
<feature type="chain" id="PRO_0000050225" description="Putative regulatory protein CA_C1717">
    <location>
        <begin position="1"/>
        <end position="92"/>
    </location>
</feature>
<comment type="similarity">
    <text evidence="1">Belongs to the RemA family.</text>
</comment>